<organism>
    <name type="scientific">Arabidopsis thaliana</name>
    <name type="common">Mouse-ear cress</name>
    <dbReference type="NCBI Taxonomy" id="3702"/>
    <lineage>
        <taxon>Eukaryota</taxon>
        <taxon>Viridiplantae</taxon>
        <taxon>Streptophyta</taxon>
        <taxon>Embryophyta</taxon>
        <taxon>Tracheophyta</taxon>
        <taxon>Spermatophyta</taxon>
        <taxon>Magnoliopsida</taxon>
        <taxon>eudicotyledons</taxon>
        <taxon>Gunneridae</taxon>
        <taxon>Pentapetalae</taxon>
        <taxon>rosids</taxon>
        <taxon>malvids</taxon>
        <taxon>Brassicales</taxon>
        <taxon>Brassicaceae</taxon>
        <taxon>Camelineae</taxon>
        <taxon>Arabidopsis</taxon>
    </lineage>
</organism>
<dbReference type="EMBL" id="AC007169">
    <property type="protein sequence ID" value="AAD26473.1"/>
    <property type="molecule type" value="Genomic_DNA"/>
</dbReference>
<dbReference type="EMBL" id="CP002685">
    <property type="protein sequence ID" value="AEC08551.1"/>
    <property type="molecule type" value="Genomic_DNA"/>
</dbReference>
<dbReference type="EMBL" id="DQ446584">
    <property type="protein sequence ID" value="ABE65464.1"/>
    <property type="molecule type" value="Genomic_DNA"/>
</dbReference>
<dbReference type="EMBL" id="DQ653032">
    <property type="protein sequence ID" value="ABK28202.1"/>
    <property type="status" value="ALT_SEQ"/>
    <property type="molecule type" value="Genomic_DNA"/>
</dbReference>
<dbReference type="EMBL" id="AB493573">
    <property type="protein sequence ID" value="BAH30411.1"/>
    <property type="molecule type" value="Genomic_DNA"/>
</dbReference>
<dbReference type="PIR" id="A84721">
    <property type="entry name" value="A84721"/>
</dbReference>
<dbReference type="RefSeq" id="NP_180704.1">
    <property type="nucleotide sequence ID" value="NM_128703.1"/>
</dbReference>
<dbReference type="STRING" id="3702.Q9SIC3"/>
<dbReference type="iPTMnet" id="Q9SIC3"/>
<dbReference type="PaxDb" id="3702-AT2G31460.1"/>
<dbReference type="EnsemblPlants" id="AT2G31460.1">
    <property type="protein sequence ID" value="AT2G31460.1"/>
    <property type="gene ID" value="AT2G31460"/>
</dbReference>
<dbReference type="GeneID" id="817704"/>
<dbReference type="Gramene" id="AT2G31460.1">
    <property type="protein sequence ID" value="AT2G31460.1"/>
    <property type="gene ID" value="AT2G31460"/>
</dbReference>
<dbReference type="KEGG" id="ath:AT2G31460"/>
<dbReference type="Araport" id="AT2G31460"/>
<dbReference type="TAIR" id="AT2G31460"/>
<dbReference type="HOGENOM" id="CLU_1139372_0_0_1"/>
<dbReference type="InParanoid" id="Q9SIC3"/>
<dbReference type="OrthoDB" id="1042706at2759"/>
<dbReference type="PhylomeDB" id="Q9SIC3"/>
<dbReference type="PRO" id="PR:Q9SIC3"/>
<dbReference type="Proteomes" id="UP000006548">
    <property type="component" value="Chromosome 2"/>
</dbReference>
<dbReference type="ExpressionAtlas" id="Q9SIC3">
    <property type="expression patterns" value="baseline and differential"/>
</dbReference>
<dbReference type="GO" id="GO:0005634">
    <property type="term" value="C:nucleus"/>
    <property type="evidence" value="ECO:0007669"/>
    <property type="project" value="UniProtKB-SubCell"/>
</dbReference>
<dbReference type="GO" id="GO:0003677">
    <property type="term" value="F:DNA binding"/>
    <property type="evidence" value="ECO:0007669"/>
    <property type="project" value="UniProtKB-KW"/>
</dbReference>
<dbReference type="Gene3D" id="2.40.330.10">
    <property type="entry name" value="DNA-binding pseudobarrel domain"/>
    <property type="match status" value="1"/>
</dbReference>
<dbReference type="InterPro" id="IPR005508">
    <property type="entry name" value="At2g31720-like"/>
</dbReference>
<dbReference type="InterPro" id="IPR015300">
    <property type="entry name" value="DNA-bd_pseudobarrel_sf"/>
</dbReference>
<dbReference type="PANTHER" id="PTHR31541">
    <property type="entry name" value="B3 DOMAIN PLANT PROTEIN-RELATED"/>
    <property type="match status" value="1"/>
</dbReference>
<dbReference type="PANTHER" id="PTHR31541:SF56">
    <property type="entry name" value="DOMAIN PROTEIN, PUTATIVE (DUF313)-RELATED"/>
    <property type="match status" value="1"/>
</dbReference>
<dbReference type="Pfam" id="PF03754">
    <property type="entry name" value="At2g31720-like"/>
    <property type="match status" value="1"/>
</dbReference>
<dbReference type="SUPFAM" id="SSF101936">
    <property type="entry name" value="DNA-binding pseudobarrel domain"/>
    <property type="match status" value="1"/>
</dbReference>
<protein>
    <recommendedName>
        <fullName>Putative B3 domain-containing protein At2g31460</fullName>
    </recommendedName>
</protein>
<accession>Q9SIC3</accession>
<accession>A0MER0</accession>
<feature type="chain" id="PRO_0000412849" description="Putative B3 domain-containing protein At2g31460">
    <location>
        <begin position="1"/>
        <end position="244"/>
    </location>
</feature>
<feature type="DNA-binding region" description="TF-B3">
    <location>
        <begin position="49"/>
        <end position="147"/>
    </location>
</feature>
<feature type="region of interest" description="Disordered" evidence="2">
    <location>
        <begin position="175"/>
        <end position="196"/>
    </location>
</feature>
<feature type="region of interest" description="Disordered" evidence="2">
    <location>
        <begin position="217"/>
        <end position="244"/>
    </location>
</feature>
<feature type="compositionally biased region" description="Basic and acidic residues" evidence="2">
    <location>
        <begin position="235"/>
        <end position="244"/>
    </location>
</feature>
<comment type="subcellular location">
    <subcellularLocation>
        <location evidence="1">Nucleus</location>
    </subcellularLocation>
</comment>
<comment type="sequence caution" evidence="3">
    <conflict type="erroneous termination">
        <sequence resource="EMBL-CDS" id="ABK28202"/>
    </conflict>
    <text>Extended C-terminus.</text>
</comment>
<proteinExistence type="inferred from homology"/>
<sequence length="244" mass="27591">MSDSAEMQQPELLLKSMNKLNGYHPQLIIPKKTLFKCDLDDKQSRLQVSSMHMENSGFLTEDEKRTIEAQKMKKRRTAGLRVAFIDPESQQYVLELHKWTKSYAFVKGWNKVVDKNDKTFKVGDVFSLWVFRCGGVNPVHDGVNLSGGHADSVVDGLEQGSLCFVLVPAKVSVHDGNLPQDSGHDGHNDNLPQDSVEPSSFFDESYELNHLFFDQEDSQGYLPDEDEDFGFNDDGSIRDSGHYQ</sequence>
<gene>
    <name type="ordered locus">At2g31460</name>
    <name type="ORF">T28P16.5</name>
</gene>
<reference key="1">
    <citation type="journal article" date="1999" name="Nature">
        <title>Sequence and analysis of chromosome 2 of the plant Arabidopsis thaliana.</title>
        <authorList>
            <person name="Lin X."/>
            <person name="Kaul S."/>
            <person name="Rounsley S.D."/>
            <person name="Shea T.P."/>
            <person name="Benito M.-I."/>
            <person name="Town C.D."/>
            <person name="Fujii C.Y."/>
            <person name="Mason T.M."/>
            <person name="Bowman C.L."/>
            <person name="Barnstead M.E."/>
            <person name="Feldblyum T.V."/>
            <person name="Buell C.R."/>
            <person name="Ketchum K.A."/>
            <person name="Lee J.J."/>
            <person name="Ronning C.M."/>
            <person name="Koo H.L."/>
            <person name="Moffat K.S."/>
            <person name="Cronin L.A."/>
            <person name="Shen M."/>
            <person name="Pai G."/>
            <person name="Van Aken S."/>
            <person name="Umayam L."/>
            <person name="Tallon L.J."/>
            <person name="Gill J.E."/>
            <person name="Adams M.D."/>
            <person name="Carrera A.J."/>
            <person name="Creasy T.H."/>
            <person name="Goodman H.M."/>
            <person name="Somerville C.R."/>
            <person name="Copenhaver G.P."/>
            <person name="Preuss D."/>
            <person name="Nierman W.C."/>
            <person name="White O."/>
            <person name="Eisen J.A."/>
            <person name="Salzberg S.L."/>
            <person name="Fraser C.M."/>
            <person name="Venter J.C."/>
        </authorList>
    </citation>
    <scope>NUCLEOTIDE SEQUENCE [LARGE SCALE GENOMIC DNA]</scope>
    <source>
        <strain>cv. Columbia</strain>
    </source>
</reference>
<reference key="2">
    <citation type="journal article" date="2017" name="Plant J.">
        <title>Araport11: a complete reannotation of the Arabidopsis thaliana reference genome.</title>
        <authorList>
            <person name="Cheng C.Y."/>
            <person name="Krishnakumar V."/>
            <person name="Chan A.P."/>
            <person name="Thibaud-Nissen F."/>
            <person name="Schobel S."/>
            <person name="Town C.D."/>
        </authorList>
    </citation>
    <scope>GENOME REANNOTATION</scope>
    <source>
        <strain>cv. Columbia</strain>
    </source>
</reference>
<reference key="3">
    <citation type="journal article" date="2006" name="Plant Biotechnol. J.">
        <title>Simultaneous high-throughput recombinational cloning of open reading frames in closed and open configurations.</title>
        <authorList>
            <person name="Underwood B.A."/>
            <person name="Vanderhaeghen R."/>
            <person name="Whitford R."/>
            <person name="Town C.D."/>
            <person name="Hilson P."/>
        </authorList>
    </citation>
    <scope>NUCLEOTIDE SEQUENCE [LARGE SCALE GENOMIC DNA]</scope>
    <source>
        <strain>cv. Columbia</strain>
    </source>
</reference>
<reference key="4">
    <citation type="submission" date="2009-03" db="EMBL/GenBank/DDBJ databases">
        <title>ORF cloning and analysis of Arabidopsis transcription factor genes.</title>
        <authorList>
            <person name="Fujita M."/>
            <person name="Mizukado S."/>
            <person name="Seki M."/>
            <person name="Shinozaki K."/>
            <person name="Mitsuda N."/>
            <person name="Takiguchi Y."/>
            <person name="Takagi M."/>
        </authorList>
    </citation>
    <scope>NUCLEOTIDE SEQUENCE [LARGE SCALE GENOMIC DNA]</scope>
</reference>
<reference key="5">
    <citation type="journal article" date="2008" name="Trends Plant Sci.">
        <title>The plant B3 superfamily.</title>
        <authorList>
            <person name="Swaminathan K."/>
            <person name="Peterson K."/>
            <person name="Jack T."/>
        </authorList>
    </citation>
    <scope>GENE FAMILY</scope>
</reference>
<keyword id="KW-0238">DNA-binding</keyword>
<keyword id="KW-0539">Nucleus</keyword>
<keyword id="KW-1185">Reference proteome</keyword>
<keyword id="KW-0804">Transcription</keyword>
<keyword id="KW-0805">Transcription regulation</keyword>
<evidence type="ECO:0000250" key="1"/>
<evidence type="ECO:0000256" key="2">
    <source>
        <dbReference type="SAM" id="MobiDB-lite"/>
    </source>
</evidence>
<evidence type="ECO:0000305" key="3"/>
<name>Y2146_ARATH</name>